<keyword id="KW-1003">Cell membrane</keyword>
<keyword id="KW-0186">Copper</keyword>
<keyword id="KW-0249">Electron transport</keyword>
<keyword id="KW-0349">Heme</keyword>
<keyword id="KW-0408">Iron</keyword>
<keyword id="KW-0472">Membrane</keyword>
<keyword id="KW-0479">Metal-binding</keyword>
<keyword id="KW-0560">Oxidoreductase</keyword>
<keyword id="KW-1185">Reference proteome</keyword>
<keyword id="KW-0679">Respiratory chain</keyword>
<keyword id="KW-0812">Transmembrane</keyword>
<keyword id="KW-1133">Transmembrane helix</keyword>
<keyword id="KW-0813">Transport</keyword>
<evidence type="ECO:0000250" key="1"/>
<evidence type="ECO:0000255" key="2"/>
<evidence type="ECO:0000305" key="3"/>
<protein>
    <recommendedName>
        <fullName>Heme-copper oxidase subunit I+III</fullName>
        <ecNumber>1.9.3.-</ecNumber>
    </recommendedName>
</protein>
<organism>
    <name type="scientific">Aeropyrum pernix (strain ATCC 700893 / DSM 11879 / JCM 9820 / NBRC 100138 / K1)</name>
    <dbReference type="NCBI Taxonomy" id="272557"/>
    <lineage>
        <taxon>Archaea</taxon>
        <taxon>Thermoproteota</taxon>
        <taxon>Thermoprotei</taxon>
        <taxon>Desulfurococcales</taxon>
        <taxon>Desulfurococcaceae</taxon>
        <taxon>Aeropyrum</taxon>
    </lineage>
</organism>
<feature type="chain" id="PRO_0000183466" description="Heme-copper oxidase subunit I+III">
    <location>
        <begin position="1"/>
        <end position="815"/>
    </location>
</feature>
<feature type="transmembrane region" description="Helical" evidence="2">
    <location>
        <begin position="26"/>
        <end position="46"/>
    </location>
</feature>
<feature type="transmembrane region" description="Helical" evidence="2">
    <location>
        <begin position="71"/>
        <end position="91"/>
    </location>
</feature>
<feature type="transmembrane region" description="Helical" evidence="2">
    <location>
        <begin position="105"/>
        <end position="125"/>
    </location>
</feature>
<feature type="transmembrane region" description="Helical" evidence="2">
    <location>
        <begin position="157"/>
        <end position="177"/>
    </location>
</feature>
<feature type="transmembrane region" description="Helical" evidence="2">
    <location>
        <begin position="197"/>
        <end position="217"/>
    </location>
</feature>
<feature type="transmembrane region" description="Helical" evidence="2">
    <location>
        <begin position="242"/>
        <end position="262"/>
    </location>
</feature>
<feature type="transmembrane region" description="Helical" evidence="2">
    <location>
        <begin position="281"/>
        <end position="301"/>
    </location>
</feature>
<feature type="transmembrane region" description="Helical" evidence="2">
    <location>
        <begin position="314"/>
        <end position="334"/>
    </location>
</feature>
<feature type="transmembrane region" description="Helical" evidence="2">
    <location>
        <begin position="339"/>
        <end position="359"/>
    </location>
</feature>
<feature type="transmembrane region" description="Helical" evidence="2">
    <location>
        <begin position="380"/>
        <end position="400"/>
    </location>
</feature>
<feature type="transmembrane region" description="Helical" evidence="2">
    <location>
        <begin position="419"/>
        <end position="439"/>
    </location>
</feature>
<feature type="transmembrane region" description="Helical" evidence="2">
    <location>
        <begin position="463"/>
        <end position="483"/>
    </location>
</feature>
<feature type="transmembrane region" description="Helical" evidence="2">
    <location>
        <begin position="580"/>
        <end position="600"/>
    </location>
</feature>
<feature type="transmembrane region" description="Helical" evidence="2">
    <location>
        <begin position="637"/>
        <end position="657"/>
    </location>
</feature>
<feature type="transmembrane region" description="Helical" evidence="2">
    <location>
        <begin position="683"/>
        <end position="703"/>
    </location>
</feature>
<feature type="transmembrane region" description="Helical" evidence="2">
    <location>
        <begin position="708"/>
        <end position="728"/>
    </location>
</feature>
<feature type="transmembrane region" description="Helical" evidence="2">
    <location>
        <begin position="736"/>
        <end position="756"/>
    </location>
</feature>
<feature type="transmembrane region" description="Helical" evidence="2">
    <location>
        <begin position="758"/>
        <end position="778"/>
    </location>
</feature>
<feature type="transmembrane region" description="Helical" evidence="2">
    <location>
        <begin position="791"/>
        <end position="811"/>
    </location>
</feature>
<feature type="region of interest" description="COX1">
    <location>
        <begin position="1"/>
        <end position="467"/>
    </location>
</feature>
<feature type="region of interest" description="COX3">
    <location>
        <begin position="545"/>
        <end position="815"/>
    </location>
</feature>
<feature type="binding site" description="axial binding residue" evidence="3">
    <location>
        <position position="70"/>
    </location>
    <ligand>
        <name>Fe(II)-heme a</name>
        <dbReference type="ChEBI" id="CHEBI:61715"/>
    </ligand>
    <ligandPart>
        <name>Fe</name>
        <dbReference type="ChEBI" id="CHEBI:18248"/>
    </ligandPart>
</feature>
<feature type="binding site" evidence="3">
    <location>
        <position position="248"/>
    </location>
    <ligand>
        <name>Cu cation</name>
        <dbReference type="ChEBI" id="CHEBI:23378"/>
        <label>B</label>
    </ligand>
</feature>
<feature type="binding site" evidence="3">
    <location>
        <position position="252"/>
    </location>
    <ligand>
        <name>Cu cation</name>
        <dbReference type="ChEBI" id="CHEBI:23378"/>
        <label>B</label>
    </ligand>
</feature>
<feature type="binding site" evidence="3">
    <location>
        <position position="297"/>
    </location>
    <ligand>
        <name>Cu cation</name>
        <dbReference type="ChEBI" id="CHEBI:23378"/>
        <label>B</label>
    </ligand>
</feature>
<feature type="binding site" evidence="3">
    <location>
        <position position="298"/>
    </location>
    <ligand>
        <name>Cu cation</name>
        <dbReference type="ChEBI" id="CHEBI:23378"/>
        <label>B</label>
    </ligand>
</feature>
<feature type="binding site" description="axial binding residue" evidence="3">
    <location>
        <position position="383"/>
    </location>
    <ligand>
        <name>heme a3</name>
        <dbReference type="ChEBI" id="CHEBI:83282"/>
    </ligand>
    <ligandPart>
        <name>Fe</name>
        <dbReference type="ChEBI" id="CHEBI:18248"/>
    </ligandPart>
</feature>
<feature type="binding site" description="axial binding residue" evidence="3">
    <location>
        <position position="385"/>
    </location>
    <ligand>
        <name>Fe(II)-heme a</name>
        <dbReference type="ChEBI" id="CHEBI:61715"/>
    </ligand>
    <ligandPart>
        <name>Fe</name>
        <dbReference type="ChEBI" id="CHEBI:18248"/>
    </ligandPart>
</feature>
<feature type="cross-link" description="1'-histidyl-3'-tyrosine (His-Tyr)" evidence="1">
    <location>
        <begin position="248"/>
        <end position="252"/>
    </location>
</feature>
<comment type="cofactor">
    <cofactor evidence="1">
        <name>heme</name>
        <dbReference type="ChEBI" id="CHEBI:30413"/>
    </cofactor>
    <text evidence="1">Binds 2 heme groups.</text>
</comment>
<comment type="cofactor">
    <cofactor evidence="1">
        <name>Cu cation</name>
        <dbReference type="ChEBI" id="CHEBI:23378"/>
    </cofactor>
    <text evidence="1">Binds a copper B center.</text>
</comment>
<comment type="subcellular location">
    <subcellularLocation>
        <location>Cell membrane</location>
        <topology>Multi-pass membrane protein</topology>
    </subcellularLocation>
</comment>
<comment type="similarity">
    <text evidence="3">In the N-terminal section; belongs to the heme-copper respiratory oxidase family.</text>
</comment>
<comment type="similarity">
    <text evidence="3">In the C-terminal section; belongs to the cytochrome c oxidase subunit 3 family.</text>
</comment>
<proteinExistence type="inferred from homology"/>
<accession>Q9YDX6</accession>
<gene>
    <name type="primary">aoxB</name>
    <name type="ordered locus">APE_0793.1</name>
</gene>
<reference key="1">
    <citation type="submission" date="1998-11" db="EMBL/GenBank/DDBJ databases">
        <title>Heme-copper-oxidase.</title>
        <authorList>
            <person name="Wakagi T."/>
            <person name="Ishikawa R."/>
        </authorList>
    </citation>
    <scope>NUCLEOTIDE SEQUENCE [GENOMIC DNA]</scope>
    <source>
        <strain>ATCC 700893 / DSM 11879 / JCM 9820 / NBRC 100138 / K1</strain>
    </source>
</reference>
<reference key="2">
    <citation type="journal article" date="1999" name="DNA Res.">
        <title>Complete genome sequence of an aerobic hyper-thermophilic crenarchaeon, Aeropyrum pernix K1.</title>
        <authorList>
            <person name="Kawarabayasi Y."/>
            <person name="Hino Y."/>
            <person name="Horikawa H."/>
            <person name="Yamazaki S."/>
            <person name="Haikawa Y."/>
            <person name="Jin-no K."/>
            <person name="Takahashi M."/>
            <person name="Sekine M."/>
            <person name="Baba S."/>
            <person name="Ankai A."/>
            <person name="Kosugi H."/>
            <person name="Hosoyama A."/>
            <person name="Fukui S."/>
            <person name="Nagai Y."/>
            <person name="Nishijima K."/>
            <person name="Nakazawa H."/>
            <person name="Takamiya M."/>
            <person name="Masuda S."/>
            <person name="Funahashi T."/>
            <person name="Tanaka T."/>
            <person name="Kudoh Y."/>
            <person name="Yamazaki J."/>
            <person name="Kushida N."/>
            <person name="Oguchi A."/>
            <person name="Aoki K."/>
            <person name="Kubota K."/>
            <person name="Nakamura Y."/>
            <person name="Nomura N."/>
            <person name="Sako Y."/>
            <person name="Kikuchi H."/>
        </authorList>
    </citation>
    <scope>NUCLEOTIDE SEQUENCE [LARGE SCALE GENOMIC DNA]</scope>
    <source>
        <strain>ATCC 700893 / DSM 11879 / JCM 9820 / NBRC 100138 / K1</strain>
    </source>
</reference>
<sequence>MVSRLRGFLAWVYRWITTTDHKDIGLLYLVTSIAFLLIAGSLALLFRVQLAIPKSNFLTGDAYYEAVTVHGLIMLLWFASPFAFGLANYIVPLQIGARDLAFPRLNALSYWLYLLSGLVLLASFFTESGAPNVGWTLYAPLTARIYTPGIGLDLAALAIFLFSLSVTLGTINFLVTIAAMRAPGIGWFKMPMFTWSILFTVILMLWAFPPLMVGGALLLLDRNLGTEFFLNPAGGALLWDHLFWFFGHPEVYILLFPALGAMADVISTFSGKPIYAKRYILTAFLIATIISFVVWMHHMFITGTNIYTRLFYSITTILISIPFEMAVMSFIFTLYKGRLVYTVPMLFAVGALLNFIIGGSTGVYLGSIAIDRGFRGTYWVVAHFHYILVGTVTLGLIAGLYYWWPKITGRTYSERLGKIHFALAMLGVALTFLPQFALMDMPRRYFTYDIPEWVPLNQLSTLGAFIFGGSMAIGLVNFLYSLVKGGSAAPNPWNSWTLEWFTNSPPPKHNFDGVPVVRKDNTVVFVSEEALSKYGKDAIVEGRVDVSNVPLSGGQSHSSHGLTHHGTTDPLVLAAGLTLALFGLFVSKPLSYLGAIVFLLSLARWLWKDVKNVFAEELPGYVEHWPFPKDKIRSAMWVFIASEVATFGSIFSAYFFIRFNPVGKFLTEAWPPGYLVHDVNVGLINTIILFTGTMLFTLAYLGVKRDNYLITLSGLLGTLFMAIYFLTVKYFEWKELLIAGLGLDAGMYMQAYYVTTGAHALHVILGVLATTYLLVKLFNGNLRGRQALSEVLAVGIYWGIVEIVWTLVFPLYYLV</sequence>
<name>AOX1_AERPE</name>
<dbReference type="EC" id="1.9.3.-"/>
<dbReference type="EMBL" id="AB020482">
    <property type="protein sequence ID" value="BAA86072.1"/>
    <property type="molecule type" value="Genomic_DNA"/>
</dbReference>
<dbReference type="EMBL" id="BA000002">
    <property type="protein sequence ID" value="BAA79771.2"/>
    <property type="molecule type" value="Genomic_DNA"/>
</dbReference>
<dbReference type="PIR" id="C72671">
    <property type="entry name" value="C72671"/>
</dbReference>
<dbReference type="SMR" id="Q9YDX6"/>
<dbReference type="STRING" id="272557.APE_0793.1"/>
<dbReference type="EnsemblBacteria" id="BAA79771">
    <property type="protein sequence ID" value="BAA79771"/>
    <property type="gene ID" value="APE_0793.1"/>
</dbReference>
<dbReference type="KEGG" id="ape:APE_0793.1"/>
<dbReference type="PATRIC" id="fig|272557.25.peg.572"/>
<dbReference type="eggNOG" id="arCOG01237">
    <property type="taxonomic scope" value="Archaea"/>
</dbReference>
<dbReference type="Proteomes" id="UP000002518">
    <property type="component" value="Chromosome"/>
</dbReference>
<dbReference type="GO" id="GO:0005886">
    <property type="term" value="C:plasma membrane"/>
    <property type="evidence" value="ECO:0007669"/>
    <property type="project" value="UniProtKB-SubCell"/>
</dbReference>
<dbReference type="GO" id="GO:0004129">
    <property type="term" value="F:cytochrome-c oxidase activity"/>
    <property type="evidence" value="ECO:0007669"/>
    <property type="project" value="InterPro"/>
</dbReference>
<dbReference type="GO" id="GO:0020037">
    <property type="term" value="F:heme binding"/>
    <property type="evidence" value="ECO:0007669"/>
    <property type="project" value="InterPro"/>
</dbReference>
<dbReference type="GO" id="GO:0046872">
    <property type="term" value="F:metal ion binding"/>
    <property type="evidence" value="ECO:0007669"/>
    <property type="project" value="UniProtKB-KW"/>
</dbReference>
<dbReference type="GO" id="GO:0009060">
    <property type="term" value="P:aerobic respiration"/>
    <property type="evidence" value="ECO:0007669"/>
    <property type="project" value="InterPro"/>
</dbReference>
<dbReference type="GO" id="GO:0015990">
    <property type="term" value="P:electron transport coupled proton transport"/>
    <property type="evidence" value="ECO:0007669"/>
    <property type="project" value="TreeGrafter"/>
</dbReference>
<dbReference type="GO" id="GO:0022904">
    <property type="term" value="P:respiratory electron transport chain"/>
    <property type="evidence" value="ECO:0007669"/>
    <property type="project" value="InterPro"/>
</dbReference>
<dbReference type="CDD" id="cd00386">
    <property type="entry name" value="Heme_Cu_Oxidase_III_like"/>
    <property type="match status" value="1"/>
</dbReference>
<dbReference type="Gene3D" id="1.20.120.80">
    <property type="entry name" value="Cytochrome c oxidase, subunit III, four-helix bundle"/>
    <property type="match status" value="1"/>
</dbReference>
<dbReference type="Gene3D" id="1.20.210.10">
    <property type="entry name" value="Cytochrome c oxidase-like, subunit I domain"/>
    <property type="match status" value="1"/>
</dbReference>
<dbReference type="InterPro" id="IPR023616">
    <property type="entry name" value="Cyt_c_oxase-like_su1_dom"/>
</dbReference>
<dbReference type="InterPro" id="IPR036927">
    <property type="entry name" value="Cyt_c_oxase-like_su1_sf"/>
</dbReference>
<dbReference type="InterPro" id="IPR000883">
    <property type="entry name" value="Cyt_C_Oxase_1"/>
</dbReference>
<dbReference type="InterPro" id="IPR023615">
    <property type="entry name" value="Cyt_c_Oxase_su1_BS"/>
</dbReference>
<dbReference type="InterPro" id="IPR000298">
    <property type="entry name" value="Cyt_c_oxidase-like_su3"/>
</dbReference>
<dbReference type="InterPro" id="IPR035973">
    <property type="entry name" value="Cyt_c_oxidase_su3-like_sf"/>
</dbReference>
<dbReference type="InterPro" id="IPR013833">
    <property type="entry name" value="Cyt_c_oxidase_su3_a-hlx"/>
</dbReference>
<dbReference type="PANTHER" id="PTHR10422">
    <property type="entry name" value="CYTOCHROME C OXIDASE SUBUNIT 1"/>
    <property type="match status" value="1"/>
</dbReference>
<dbReference type="PANTHER" id="PTHR10422:SF18">
    <property type="entry name" value="CYTOCHROME C OXIDASE SUBUNIT 1"/>
    <property type="match status" value="1"/>
</dbReference>
<dbReference type="Pfam" id="PF00115">
    <property type="entry name" value="COX1"/>
    <property type="match status" value="1"/>
</dbReference>
<dbReference type="Pfam" id="PF00510">
    <property type="entry name" value="COX3"/>
    <property type="match status" value="1"/>
</dbReference>
<dbReference type="PRINTS" id="PR01165">
    <property type="entry name" value="CYCOXIDASEI"/>
</dbReference>
<dbReference type="SUPFAM" id="SSF81442">
    <property type="entry name" value="Cytochrome c oxidase subunit I-like"/>
    <property type="match status" value="1"/>
</dbReference>
<dbReference type="SUPFAM" id="SSF81452">
    <property type="entry name" value="Cytochrome c oxidase subunit III-like"/>
    <property type="match status" value="1"/>
</dbReference>
<dbReference type="PROSITE" id="PS50855">
    <property type="entry name" value="COX1"/>
    <property type="match status" value="1"/>
</dbReference>
<dbReference type="PROSITE" id="PS00077">
    <property type="entry name" value="COX1_CUB"/>
    <property type="match status" value="1"/>
</dbReference>
<dbReference type="PROSITE" id="PS50253">
    <property type="entry name" value="COX3"/>
    <property type="match status" value="1"/>
</dbReference>